<proteinExistence type="evidence at protein level"/>
<feature type="chain" id="PRO_0000145198" description="DNA topoisomerase 3">
    <location>
        <begin position="1"/>
        <end position="656"/>
    </location>
</feature>
<feature type="domain" description="Toprim" evidence="2">
    <location>
        <begin position="2"/>
        <end position="156"/>
    </location>
</feature>
<feature type="domain" description="Topo IA-type catalytic" evidence="3">
    <location>
        <begin position="172"/>
        <end position="635"/>
    </location>
</feature>
<feature type="active site" description="O-(5'-phospho-DNA)-tyrosine intermediate" evidence="3">
    <location>
        <position position="356"/>
    </location>
</feature>
<protein>
    <recommendedName>
        <fullName>DNA topoisomerase 3</fullName>
        <ecNumber evidence="4">5.6.2.1</ecNumber>
    </recommendedName>
    <alternativeName>
        <fullName>DNA topoisomerase III</fullName>
    </alternativeName>
</protein>
<comment type="function">
    <text evidence="1 8">Releases the supercoiling and torsional tension of DNA introduced during the DNA replication and transcription by transiently cleaving and rejoining one strand of the DNA duplex. Introduces a single-strand break via transesterification at a target site in duplex DNA. The scissile phosphodiester is attacked by the catalytic tyrosine of the enzyme, resulting in the formation of a DNA-(5'-phosphotyrosyl)-enzyme intermediate and the expulsion of a 3'-OH DNA strand. The free DNA strand than undergoes passage around the unbroken strand thus removing DNA supercoils. Finally, in the religation step, the DNA 3'-OH attacks the covalent intermediate to expel the active-site tyrosine and restore the DNA phosphodiester backbone (By similarity). Essential for proper chromosome segregation in both meiosis and mitosis. Weakly relaxes negative supercoils and displays a distinct preference for binding single-stranded DNA. The TOP3-SGS1 protein complex may function as a eukaryotic reverse gyrase introducing positive supercoils into extrachromosomal ribosomal DNA rings.</text>
</comment>
<comment type="catalytic activity">
    <reaction evidence="4">
        <text>ATP-independent breakage of single-stranded DNA, followed by passage and rejoining.</text>
        <dbReference type="EC" id="5.6.2.1"/>
    </reaction>
</comment>
<comment type="subunit">
    <text evidence="6 7">Forms a complex with SGS1 and RMI1. Interacts with SGS1.</text>
</comment>
<comment type="interaction">
    <interactant intactId="EBI-19365">
        <id>P13099</id>
    </interactant>
    <interactant intactId="EBI-38690">
        <id>Q02685</id>
        <label>RMI1</label>
    </interactant>
    <organismsDiffer>false</organismsDiffer>
    <experiments>9</experiments>
</comment>
<comment type="interaction">
    <interactant intactId="EBI-19365">
        <id>P13099</id>
    </interactant>
    <interactant intactId="EBI-17059">
        <id>P35187</id>
        <label>SGS1</label>
    </interactant>
    <organismsDiffer>false</organismsDiffer>
    <experiments>6</experiments>
</comment>
<comment type="miscellaneous">
    <text evidence="5">Present with 468 molecules/cell in log phase SD medium.</text>
</comment>
<comment type="similarity">
    <text evidence="3 9">Belongs to the type IA topoisomerase family.</text>
</comment>
<reference key="1">
    <citation type="journal article" date="1989" name="Cell">
        <title>A hyper-recombination mutation in S. cerevisiae identifies a novel eukaryotic topoisomerase.</title>
        <authorList>
            <person name="Wallis J.W."/>
            <person name="Chrebet G."/>
            <person name="Brodsky G."/>
            <person name="Rolfe M."/>
            <person name="Rothstein R."/>
        </authorList>
    </citation>
    <scope>NUCLEOTIDE SEQUENCE [GENOMIC DNA]</scope>
    <scope>FUNCTION</scope>
</reference>
<reference key="2">
    <citation type="journal article" date="1997" name="Nature">
        <title>The nucleotide sequence of Saccharomyces cerevisiae chromosome XII.</title>
        <authorList>
            <person name="Johnston M."/>
            <person name="Hillier L.W."/>
            <person name="Riles L."/>
            <person name="Albermann K."/>
            <person name="Andre B."/>
            <person name="Ansorge W."/>
            <person name="Benes V."/>
            <person name="Brueckner M."/>
            <person name="Delius H."/>
            <person name="Dubois E."/>
            <person name="Duesterhoeft A."/>
            <person name="Entian K.-D."/>
            <person name="Floeth M."/>
            <person name="Goffeau A."/>
            <person name="Hebling U."/>
            <person name="Heumann K."/>
            <person name="Heuss-Neitzel D."/>
            <person name="Hilbert H."/>
            <person name="Hilger F."/>
            <person name="Kleine K."/>
            <person name="Koetter P."/>
            <person name="Louis E.J."/>
            <person name="Messenguy F."/>
            <person name="Mewes H.-W."/>
            <person name="Miosga T."/>
            <person name="Moestl D."/>
            <person name="Mueller-Auer S."/>
            <person name="Nentwich U."/>
            <person name="Obermaier B."/>
            <person name="Piravandi E."/>
            <person name="Pohl T.M."/>
            <person name="Portetelle D."/>
            <person name="Purnelle B."/>
            <person name="Rechmann S."/>
            <person name="Rieger M."/>
            <person name="Rinke M."/>
            <person name="Rose M."/>
            <person name="Scharfe M."/>
            <person name="Scherens B."/>
            <person name="Scholler P."/>
            <person name="Schwager C."/>
            <person name="Schwarz S."/>
            <person name="Underwood A.P."/>
            <person name="Urrestarazu L.A."/>
            <person name="Vandenbol M."/>
            <person name="Verhasselt P."/>
            <person name="Vierendeels F."/>
            <person name="Voet M."/>
            <person name="Volckaert G."/>
            <person name="Voss H."/>
            <person name="Wambutt R."/>
            <person name="Wedler E."/>
            <person name="Wedler H."/>
            <person name="Zimmermann F.K."/>
            <person name="Zollner A."/>
            <person name="Hani J."/>
            <person name="Hoheisel J.D."/>
        </authorList>
    </citation>
    <scope>NUCLEOTIDE SEQUENCE [LARGE SCALE GENOMIC DNA]</scope>
    <source>
        <strain>ATCC 204508 / S288c</strain>
    </source>
</reference>
<reference key="3">
    <citation type="journal article" date="2014" name="G3 (Bethesda)">
        <title>The reference genome sequence of Saccharomyces cerevisiae: Then and now.</title>
        <authorList>
            <person name="Engel S.R."/>
            <person name="Dietrich F.S."/>
            <person name="Fisk D.G."/>
            <person name="Binkley G."/>
            <person name="Balakrishnan R."/>
            <person name="Costanzo M.C."/>
            <person name="Dwight S.S."/>
            <person name="Hitz B.C."/>
            <person name="Karra K."/>
            <person name="Nash R.S."/>
            <person name="Weng S."/>
            <person name="Wong E.D."/>
            <person name="Lloyd P."/>
            <person name="Skrzypek M.S."/>
            <person name="Miyasato S.R."/>
            <person name="Simison M."/>
            <person name="Cherry J.M."/>
        </authorList>
    </citation>
    <scope>GENOME REANNOTATION</scope>
    <source>
        <strain>ATCC 204508 / S288c</strain>
    </source>
</reference>
<reference key="4">
    <citation type="journal article" date="1993" name="Mol. Cell. Biol.">
        <title>An essential yeast protein, CBF5p, binds in vitro to centromeres and microtubules.</title>
        <authorList>
            <person name="Jiang W."/>
            <person name="Middleton K."/>
            <person name="Yoon H.-J."/>
            <person name="Fouquet C."/>
            <person name="Carbon J."/>
        </authorList>
    </citation>
    <scope>PROTEIN SEQUENCE OF 578-592; 605-615; 794-805 AND 1038-1046</scope>
</reference>
<reference key="5">
    <citation type="journal article" date="2003" name="Nature">
        <title>Global analysis of protein expression in yeast.</title>
        <authorList>
            <person name="Ghaemmaghami S."/>
            <person name="Huh W.-K."/>
            <person name="Bower K."/>
            <person name="Howson R.W."/>
            <person name="Belle A."/>
            <person name="Dephoure N."/>
            <person name="O'Shea E.K."/>
            <person name="Weissman J.S."/>
        </authorList>
    </citation>
    <scope>LEVEL OF PROTEIN EXPRESSION [LARGE SCALE ANALYSIS]</scope>
</reference>
<reference key="6">
    <citation type="journal article" date="2005" name="EMBO J.">
        <title>RMI1/NCE4, a suppressor of genome instability, encodes a member of the RecQ helicase/Topo III complex.</title>
        <authorList>
            <person name="Chang M."/>
            <person name="Bellaoui M."/>
            <person name="Zhang C."/>
            <person name="Desai R."/>
            <person name="Morozov P."/>
            <person name="Delgado-Cruzata L."/>
            <person name="Rothstein R."/>
            <person name="Freyer G.A."/>
            <person name="Boone C."/>
            <person name="Brown G.W."/>
        </authorList>
    </citation>
    <scope>SUBUNIT</scope>
</reference>
<reference key="7">
    <citation type="journal article" date="2005" name="Mol. Cell. Biol.">
        <title>Yeast Rmi1/Nce4 controls genome stability as a subunit of the Sgs1-Top3 complex.</title>
        <authorList>
            <person name="Mullen J.R."/>
            <person name="Nallaseth F.S."/>
            <person name="Lan Y.Q."/>
            <person name="Slagle C.E."/>
            <person name="Brill S.J."/>
        </authorList>
    </citation>
    <scope>SUBUNIT</scope>
</reference>
<keyword id="KW-0903">Direct protein sequencing</keyword>
<keyword id="KW-0238">DNA-binding</keyword>
<keyword id="KW-0413">Isomerase</keyword>
<keyword id="KW-1185">Reference proteome</keyword>
<keyword id="KW-0799">Topoisomerase</keyword>
<evidence type="ECO:0000250" key="1"/>
<evidence type="ECO:0000255" key="2">
    <source>
        <dbReference type="PROSITE-ProRule" id="PRU00995"/>
    </source>
</evidence>
<evidence type="ECO:0000255" key="3">
    <source>
        <dbReference type="PROSITE-ProRule" id="PRU01383"/>
    </source>
</evidence>
<evidence type="ECO:0000255" key="4">
    <source>
        <dbReference type="PROSITE-ProRule" id="PRU10131"/>
    </source>
</evidence>
<evidence type="ECO:0000269" key="5">
    <source>
    </source>
</evidence>
<evidence type="ECO:0000269" key="6">
    <source>
    </source>
</evidence>
<evidence type="ECO:0000269" key="7">
    <source>
    </source>
</evidence>
<evidence type="ECO:0000269" key="8">
    <source>
    </source>
</evidence>
<evidence type="ECO:0000305" key="9"/>
<sequence>MKVLCVAEKNSIAKAVSQILGGGRSTSRDSGYMYVKNYDFMFSGFPFARNGANCEVTMTSVAGHLTGIDFSHDSHGWGKCAIQELFDAPLNEIMNNNQKKIASNIKREARNADYLMIWTDCDREGEYIGWEIWQEAKRGNRLIQNDQVYRAVFSHLERQHILNAARNPSRLDMKSVHAVGTRIEIDLRAGVTFTRLLTETLRNKLRNQATMTKDGAKHRGGNKNDSQVVSYGTCQFPTLGFVVDRFERIRNFVPEEFWYIQLVVENKDNGGTTTFQWDRGHLFDRLSVLTFYETCIETAGNVAQVVDLKSKPTTKYRPLPLTTVELQKNCARYLRLNAKQSLDAAEKLYQKGFISYPRTETDTFPHAMDLKSLVEKQAQLDQLAAGGRTAWASYAASLLQPENTSNNNKFKFPRSGSHDDKAHPPIHPIVSLGPEANVSPVERRVYEYVARHFLACCSEDAKGQSMTLVLDWAVERFSASGLVVLERNFLDVYPWARWETTKQLPRLEMNALVDIAKAEMKAGTTAPPKPMTESELILLMDTNGIGTDATIAEHIDKIQVRNYVRSEKVGKETYLQPTTLGVSLVHGFEAIGLEDSFAKPFQRREMEQDLKKICEGHASKTDVVKDIVEKYRKYWHKTNACKNTLLQVYDRVKASM</sequence>
<gene>
    <name type="primary">TOP3</name>
    <name type="synonym">EDR1</name>
    <name type="ordered locus">YLR234W</name>
    <name type="ORF">L8083.3</name>
</gene>
<accession>P13099</accession>
<accession>D6VYN4</accession>
<name>TOP3_YEAST</name>
<organism>
    <name type="scientific">Saccharomyces cerevisiae (strain ATCC 204508 / S288c)</name>
    <name type="common">Baker's yeast</name>
    <dbReference type="NCBI Taxonomy" id="559292"/>
    <lineage>
        <taxon>Eukaryota</taxon>
        <taxon>Fungi</taxon>
        <taxon>Dikarya</taxon>
        <taxon>Ascomycota</taxon>
        <taxon>Saccharomycotina</taxon>
        <taxon>Saccharomycetes</taxon>
        <taxon>Saccharomycetales</taxon>
        <taxon>Saccharomycetaceae</taxon>
        <taxon>Saccharomyces</taxon>
    </lineage>
</organism>
<dbReference type="EC" id="5.6.2.1" evidence="4"/>
<dbReference type="EMBL" id="M24939">
    <property type="protein sequence ID" value="AAA35161.1"/>
    <property type="molecule type" value="Genomic_DNA"/>
</dbReference>
<dbReference type="EMBL" id="U19027">
    <property type="protein sequence ID" value="AAB67406.1"/>
    <property type="molecule type" value="Genomic_DNA"/>
</dbReference>
<dbReference type="EMBL" id="BK006945">
    <property type="protein sequence ID" value="DAA09550.1"/>
    <property type="molecule type" value="Genomic_DNA"/>
</dbReference>
<dbReference type="PIR" id="A33169">
    <property type="entry name" value="ISBYT3"/>
</dbReference>
<dbReference type="RefSeq" id="NP_013335.1">
    <property type="nucleotide sequence ID" value="NM_001182121.1"/>
</dbReference>
<dbReference type="SMR" id="P13099"/>
<dbReference type="BioGRID" id="31503">
    <property type="interactions" value="238"/>
</dbReference>
<dbReference type="ComplexPortal" id="CPX-1071">
    <property type="entry name" value="RecQ helicase-Topo III complex"/>
</dbReference>
<dbReference type="DIP" id="DIP-2912N"/>
<dbReference type="FunCoup" id="P13099">
    <property type="interactions" value="1132"/>
</dbReference>
<dbReference type="IntAct" id="P13099">
    <property type="interactions" value="6"/>
</dbReference>
<dbReference type="MINT" id="P13099"/>
<dbReference type="STRING" id="4932.YLR234W"/>
<dbReference type="iPTMnet" id="P13099"/>
<dbReference type="PaxDb" id="4932-YLR234W"/>
<dbReference type="PeptideAtlas" id="P13099"/>
<dbReference type="EnsemblFungi" id="YLR234W_mRNA">
    <property type="protein sequence ID" value="YLR234W"/>
    <property type="gene ID" value="YLR234W"/>
</dbReference>
<dbReference type="GeneID" id="850935"/>
<dbReference type="KEGG" id="sce:YLR234W"/>
<dbReference type="AGR" id="SGD:S000004224"/>
<dbReference type="SGD" id="S000004224">
    <property type="gene designation" value="TOP3"/>
</dbReference>
<dbReference type="VEuPathDB" id="FungiDB:YLR234W"/>
<dbReference type="eggNOG" id="KOG1956">
    <property type="taxonomic scope" value="Eukaryota"/>
</dbReference>
<dbReference type="GeneTree" id="ENSGT00940000156701"/>
<dbReference type="HOGENOM" id="CLU_002929_1_1_1"/>
<dbReference type="InParanoid" id="P13099"/>
<dbReference type="OMA" id="VIHNVYS"/>
<dbReference type="OrthoDB" id="430051at2759"/>
<dbReference type="BioCyc" id="YEAST:G3O-32345-MONOMER"/>
<dbReference type="BioGRID-ORCS" id="850935">
    <property type="hits" value="7 hits in 10 CRISPR screens"/>
</dbReference>
<dbReference type="PRO" id="PR:P13099"/>
<dbReference type="Proteomes" id="UP000002311">
    <property type="component" value="Chromosome XII"/>
</dbReference>
<dbReference type="RNAct" id="P13099">
    <property type="molecule type" value="protein"/>
</dbReference>
<dbReference type="GO" id="GO:0005634">
    <property type="term" value="C:nucleus"/>
    <property type="evidence" value="ECO:0000318"/>
    <property type="project" value="GO_Central"/>
</dbReference>
<dbReference type="GO" id="GO:0031422">
    <property type="term" value="C:RecQ family helicase-topoisomerase III complex"/>
    <property type="evidence" value="ECO:0000314"/>
    <property type="project" value="SGD"/>
</dbReference>
<dbReference type="GO" id="GO:0003677">
    <property type="term" value="F:DNA binding"/>
    <property type="evidence" value="ECO:0007669"/>
    <property type="project" value="UniProtKB-KW"/>
</dbReference>
<dbReference type="GO" id="GO:0003916">
    <property type="term" value="F:DNA topoisomerase activity"/>
    <property type="evidence" value="ECO:0000314"/>
    <property type="project" value="SGD"/>
</dbReference>
<dbReference type="GO" id="GO:0003917">
    <property type="term" value="F:DNA topoisomerase type I (single strand cut, ATP-independent) activity"/>
    <property type="evidence" value="ECO:0000314"/>
    <property type="project" value="SGD"/>
</dbReference>
<dbReference type="GO" id="GO:0140226">
    <property type="term" value="F:RNA topoisomerase activity"/>
    <property type="evidence" value="ECO:0000314"/>
    <property type="project" value="FlyBase"/>
</dbReference>
<dbReference type="GO" id="GO:0006310">
    <property type="term" value="P:DNA recombination"/>
    <property type="evidence" value="ECO:0000318"/>
    <property type="project" value="GO_Central"/>
</dbReference>
<dbReference type="GO" id="GO:0006281">
    <property type="term" value="P:DNA repair"/>
    <property type="evidence" value="ECO:0000318"/>
    <property type="project" value="GO_Central"/>
</dbReference>
<dbReference type="GO" id="GO:0006265">
    <property type="term" value="P:DNA topological change"/>
    <property type="evidence" value="ECO:0000314"/>
    <property type="project" value="SGD"/>
</dbReference>
<dbReference type="GO" id="GO:0000724">
    <property type="term" value="P:double-strand break repair via homologous recombination"/>
    <property type="evidence" value="ECO:0000314"/>
    <property type="project" value="ComplexPortal"/>
</dbReference>
<dbReference type="GO" id="GO:0007064">
    <property type="term" value="P:mitotic sister chromatid cohesion"/>
    <property type="evidence" value="ECO:0000315"/>
    <property type="project" value="SGD"/>
</dbReference>
<dbReference type="GO" id="GO:0007131">
    <property type="term" value="P:reciprocal meiotic recombination"/>
    <property type="evidence" value="ECO:0000315"/>
    <property type="project" value="SGD"/>
</dbReference>
<dbReference type="GO" id="GO:0000018">
    <property type="term" value="P:regulation of DNA recombination"/>
    <property type="evidence" value="ECO:0000315"/>
    <property type="project" value="SGD"/>
</dbReference>
<dbReference type="GO" id="GO:0000722">
    <property type="term" value="P:telomere maintenance via recombination"/>
    <property type="evidence" value="ECO:0000316"/>
    <property type="project" value="SGD"/>
</dbReference>
<dbReference type="GO" id="GO:0007004">
    <property type="term" value="P:telomere maintenance via telomerase"/>
    <property type="evidence" value="ECO:0000315"/>
    <property type="project" value="SGD"/>
</dbReference>
<dbReference type="CDD" id="cd00186">
    <property type="entry name" value="TOP1Ac"/>
    <property type="match status" value="1"/>
</dbReference>
<dbReference type="CDD" id="cd03362">
    <property type="entry name" value="TOPRIM_TopoIA_TopoIII"/>
    <property type="match status" value="1"/>
</dbReference>
<dbReference type="FunFam" id="1.10.290.10:FF:000001">
    <property type="entry name" value="DNA topoisomerase"/>
    <property type="match status" value="1"/>
</dbReference>
<dbReference type="FunFam" id="3.40.50.140:FF:000003">
    <property type="entry name" value="DNA topoisomerase"/>
    <property type="match status" value="1"/>
</dbReference>
<dbReference type="Gene3D" id="3.40.50.140">
    <property type="match status" value="1"/>
</dbReference>
<dbReference type="Gene3D" id="1.10.460.10">
    <property type="entry name" value="Topoisomerase I, domain 2"/>
    <property type="match status" value="1"/>
</dbReference>
<dbReference type="Gene3D" id="2.70.20.10">
    <property type="entry name" value="Topoisomerase I, domain 3"/>
    <property type="match status" value="1"/>
</dbReference>
<dbReference type="Gene3D" id="1.10.290.10">
    <property type="entry name" value="Topoisomerase I, domain 4"/>
    <property type="match status" value="1"/>
</dbReference>
<dbReference type="InterPro" id="IPR000380">
    <property type="entry name" value="Topo_IA"/>
</dbReference>
<dbReference type="InterPro" id="IPR003601">
    <property type="entry name" value="Topo_IA_2"/>
</dbReference>
<dbReference type="InterPro" id="IPR023406">
    <property type="entry name" value="Topo_IA_AS"/>
</dbReference>
<dbReference type="InterPro" id="IPR013497">
    <property type="entry name" value="Topo_IA_cen"/>
</dbReference>
<dbReference type="InterPro" id="IPR013824">
    <property type="entry name" value="Topo_IA_cen_sub1"/>
</dbReference>
<dbReference type="InterPro" id="IPR013825">
    <property type="entry name" value="Topo_IA_cen_sub2"/>
</dbReference>
<dbReference type="InterPro" id="IPR013826">
    <property type="entry name" value="Topo_IA_cen_sub3"/>
</dbReference>
<dbReference type="InterPro" id="IPR023405">
    <property type="entry name" value="Topo_IA_core_domain"/>
</dbReference>
<dbReference type="InterPro" id="IPR003602">
    <property type="entry name" value="Topo_IA_DNA-bd_dom"/>
</dbReference>
<dbReference type="InterPro" id="IPR006171">
    <property type="entry name" value="TOPRIM_dom"/>
</dbReference>
<dbReference type="InterPro" id="IPR034144">
    <property type="entry name" value="TOPRIM_TopoIII"/>
</dbReference>
<dbReference type="PANTHER" id="PTHR11390:SF21">
    <property type="entry name" value="DNA TOPOISOMERASE 3-ALPHA"/>
    <property type="match status" value="1"/>
</dbReference>
<dbReference type="PANTHER" id="PTHR11390">
    <property type="entry name" value="PROKARYOTIC DNA TOPOISOMERASE"/>
    <property type="match status" value="1"/>
</dbReference>
<dbReference type="Pfam" id="PF01131">
    <property type="entry name" value="Topoisom_bac"/>
    <property type="match status" value="1"/>
</dbReference>
<dbReference type="Pfam" id="PF01751">
    <property type="entry name" value="Toprim"/>
    <property type="match status" value="1"/>
</dbReference>
<dbReference type="PRINTS" id="PR00417">
    <property type="entry name" value="PRTPISMRASEI"/>
</dbReference>
<dbReference type="SMART" id="SM00437">
    <property type="entry name" value="TOP1Ac"/>
    <property type="match status" value="1"/>
</dbReference>
<dbReference type="SMART" id="SM00436">
    <property type="entry name" value="TOP1Bc"/>
    <property type="match status" value="1"/>
</dbReference>
<dbReference type="SMART" id="SM00493">
    <property type="entry name" value="TOPRIM"/>
    <property type="match status" value="1"/>
</dbReference>
<dbReference type="SUPFAM" id="SSF56712">
    <property type="entry name" value="Prokaryotic type I DNA topoisomerase"/>
    <property type="match status" value="1"/>
</dbReference>
<dbReference type="PROSITE" id="PS00396">
    <property type="entry name" value="TOPO_IA_1"/>
    <property type="match status" value="1"/>
</dbReference>
<dbReference type="PROSITE" id="PS52039">
    <property type="entry name" value="TOPO_IA_2"/>
    <property type="match status" value="1"/>
</dbReference>
<dbReference type="PROSITE" id="PS50880">
    <property type="entry name" value="TOPRIM"/>
    <property type="match status" value="1"/>
</dbReference>